<gene>
    <name evidence="1" type="primary">rsmH</name>
    <name type="synonym">mraW</name>
    <name type="ordered locus">RMA_0895</name>
</gene>
<feature type="chain" id="PRO_1000062835" description="Ribosomal RNA small subunit methyltransferase H">
    <location>
        <begin position="1"/>
        <end position="307"/>
    </location>
</feature>
<feature type="binding site" evidence="1">
    <location>
        <begin position="33"/>
        <end position="35"/>
    </location>
    <ligand>
        <name>S-adenosyl-L-methionine</name>
        <dbReference type="ChEBI" id="CHEBI:59789"/>
    </ligand>
</feature>
<feature type="binding site" evidence="1">
    <location>
        <position position="51"/>
    </location>
    <ligand>
        <name>S-adenosyl-L-methionine</name>
        <dbReference type="ChEBI" id="CHEBI:59789"/>
    </ligand>
</feature>
<feature type="binding site" evidence="1">
    <location>
        <position position="82"/>
    </location>
    <ligand>
        <name>S-adenosyl-L-methionine</name>
        <dbReference type="ChEBI" id="CHEBI:59789"/>
    </ligand>
</feature>
<feature type="binding site" evidence="1">
    <location>
        <position position="96"/>
    </location>
    <ligand>
        <name>S-adenosyl-L-methionine</name>
        <dbReference type="ChEBI" id="CHEBI:59789"/>
    </ligand>
</feature>
<feature type="binding site" evidence="1">
    <location>
        <position position="103"/>
    </location>
    <ligand>
        <name>S-adenosyl-L-methionine</name>
        <dbReference type="ChEBI" id="CHEBI:59789"/>
    </ligand>
</feature>
<proteinExistence type="inferred from homology"/>
<evidence type="ECO:0000255" key="1">
    <source>
        <dbReference type="HAMAP-Rule" id="MF_01007"/>
    </source>
</evidence>
<reference key="1">
    <citation type="journal article" date="2007" name="Genome Res.">
        <title>Lateral gene transfer between obligate intracellular bacteria: evidence from the Rickettsia massiliae genome.</title>
        <authorList>
            <person name="Blanc G."/>
            <person name="Ogata H."/>
            <person name="Robert C."/>
            <person name="Audic S."/>
            <person name="Claverie J.-M."/>
            <person name="Raoult D."/>
        </authorList>
    </citation>
    <scope>NUCLEOTIDE SEQUENCE [LARGE SCALE GENOMIC DNA]</scope>
    <source>
        <strain>Mtu5</strain>
    </source>
</reference>
<comment type="function">
    <text evidence="1">Specifically methylates the N4 position of cytidine in position 1402 (C1402) of 16S rRNA.</text>
</comment>
<comment type="catalytic activity">
    <reaction evidence="1">
        <text>cytidine(1402) in 16S rRNA + S-adenosyl-L-methionine = N(4)-methylcytidine(1402) in 16S rRNA + S-adenosyl-L-homocysteine + H(+)</text>
        <dbReference type="Rhea" id="RHEA:42928"/>
        <dbReference type="Rhea" id="RHEA-COMP:10286"/>
        <dbReference type="Rhea" id="RHEA-COMP:10287"/>
        <dbReference type="ChEBI" id="CHEBI:15378"/>
        <dbReference type="ChEBI" id="CHEBI:57856"/>
        <dbReference type="ChEBI" id="CHEBI:59789"/>
        <dbReference type="ChEBI" id="CHEBI:74506"/>
        <dbReference type="ChEBI" id="CHEBI:82748"/>
        <dbReference type="EC" id="2.1.1.199"/>
    </reaction>
</comment>
<comment type="subcellular location">
    <subcellularLocation>
        <location evidence="1">Cytoplasm</location>
    </subcellularLocation>
</comment>
<comment type="similarity">
    <text evidence="1">Belongs to the methyltransferase superfamily. RsmH family.</text>
</comment>
<accession>A8F247</accession>
<sequence>MIQSHVPVMLNEMLEALSPKDGESYLDCTFGAGGYSKAILESCNCYVTALDRDPNVIKRAEEIQQNYGERFDFVETNFADSFAKLKEKKFDGIVLDLGVSSMQLDIADRGFSFLHDGPLDMRMSGQGLSAEEFVNTAEEKELADVIYKYGDESFSRRIAKRIVEYRKTARIDSTGKLAEIVRSSIGFRKGKIDPATKTFQAIRIYVNDELGELEQFLVNVKNILKKDGRLVVVSFHSLEDRIVKNFFKENSEKPVVRSKYAKDDMTIDPNKWLKIITNKALASSDKEVGLNIRARSAKLRAAKAIYE</sequence>
<organism>
    <name type="scientific">Rickettsia massiliae (strain Mtu5)</name>
    <dbReference type="NCBI Taxonomy" id="416276"/>
    <lineage>
        <taxon>Bacteria</taxon>
        <taxon>Pseudomonadati</taxon>
        <taxon>Pseudomonadota</taxon>
        <taxon>Alphaproteobacteria</taxon>
        <taxon>Rickettsiales</taxon>
        <taxon>Rickettsiaceae</taxon>
        <taxon>Rickettsieae</taxon>
        <taxon>Rickettsia</taxon>
        <taxon>spotted fever group</taxon>
    </lineage>
</organism>
<dbReference type="EC" id="2.1.1.199" evidence="1"/>
<dbReference type="EMBL" id="CP000683">
    <property type="protein sequence ID" value="ABV84983.1"/>
    <property type="molecule type" value="Genomic_DNA"/>
</dbReference>
<dbReference type="RefSeq" id="WP_012152956.1">
    <property type="nucleotide sequence ID" value="NC_009900.1"/>
</dbReference>
<dbReference type="SMR" id="A8F247"/>
<dbReference type="KEGG" id="rms:RMA_0895"/>
<dbReference type="HOGENOM" id="CLU_038422_1_1_5"/>
<dbReference type="Proteomes" id="UP000001311">
    <property type="component" value="Chromosome"/>
</dbReference>
<dbReference type="GO" id="GO:0005737">
    <property type="term" value="C:cytoplasm"/>
    <property type="evidence" value="ECO:0007669"/>
    <property type="project" value="UniProtKB-SubCell"/>
</dbReference>
<dbReference type="GO" id="GO:0071424">
    <property type="term" value="F:rRNA (cytosine-N4-)-methyltransferase activity"/>
    <property type="evidence" value="ECO:0007669"/>
    <property type="project" value="UniProtKB-UniRule"/>
</dbReference>
<dbReference type="GO" id="GO:0070475">
    <property type="term" value="P:rRNA base methylation"/>
    <property type="evidence" value="ECO:0007669"/>
    <property type="project" value="UniProtKB-UniRule"/>
</dbReference>
<dbReference type="CDD" id="cd02440">
    <property type="entry name" value="AdoMet_MTases"/>
    <property type="match status" value="1"/>
</dbReference>
<dbReference type="FunFam" id="1.10.150.170:FF:000003">
    <property type="entry name" value="Ribosomal RNA small subunit methyltransferase H"/>
    <property type="match status" value="1"/>
</dbReference>
<dbReference type="Gene3D" id="1.10.150.170">
    <property type="entry name" value="Putative methyltransferase TM0872, insert domain"/>
    <property type="match status" value="1"/>
</dbReference>
<dbReference type="Gene3D" id="3.40.50.150">
    <property type="entry name" value="Vaccinia Virus protein VP39"/>
    <property type="match status" value="1"/>
</dbReference>
<dbReference type="HAMAP" id="MF_01007">
    <property type="entry name" value="16SrRNA_methyltr_H"/>
    <property type="match status" value="1"/>
</dbReference>
<dbReference type="InterPro" id="IPR002903">
    <property type="entry name" value="RsmH"/>
</dbReference>
<dbReference type="InterPro" id="IPR023397">
    <property type="entry name" value="SAM-dep_MeTrfase_MraW_recog"/>
</dbReference>
<dbReference type="InterPro" id="IPR029063">
    <property type="entry name" value="SAM-dependent_MTases_sf"/>
</dbReference>
<dbReference type="NCBIfam" id="TIGR00006">
    <property type="entry name" value="16S rRNA (cytosine(1402)-N(4))-methyltransferase RsmH"/>
    <property type="match status" value="1"/>
</dbReference>
<dbReference type="PANTHER" id="PTHR11265:SF0">
    <property type="entry name" value="12S RRNA N4-METHYLCYTIDINE METHYLTRANSFERASE"/>
    <property type="match status" value="1"/>
</dbReference>
<dbReference type="PANTHER" id="PTHR11265">
    <property type="entry name" value="S-ADENOSYL-METHYLTRANSFERASE MRAW"/>
    <property type="match status" value="1"/>
</dbReference>
<dbReference type="Pfam" id="PF01795">
    <property type="entry name" value="Methyltransf_5"/>
    <property type="match status" value="1"/>
</dbReference>
<dbReference type="PIRSF" id="PIRSF004486">
    <property type="entry name" value="MraW"/>
    <property type="match status" value="1"/>
</dbReference>
<dbReference type="SUPFAM" id="SSF81799">
    <property type="entry name" value="Putative methyltransferase TM0872, insert domain"/>
    <property type="match status" value="1"/>
</dbReference>
<dbReference type="SUPFAM" id="SSF53335">
    <property type="entry name" value="S-adenosyl-L-methionine-dependent methyltransferases"/>
    <property type="match status" value="1"/>
</dbReference>
<name>RSMH_RICM5</name>
<keyword id="KW-0963">Cytoplasm</keyword>
<keyword id="KW-0489">Methyltransferase</keyword>
<keyword id="KW-0698">rRNA processing</keyword>
<keyword id="KW-0949">S-adenosyl-L-methionine</keyword>
<keyword id="KW-0808">Transferase</keyword>
<protein>
    <recommendedName>
        <fullName evidence="1">Ribosomal RNA small subunit methyltransferase H</fullName>
        <ecNumber evidence="1">2.1.1.199</ecNumber>
    </recommendedName>
    <alternativeName>
        <fullName evidence="1">16S rRNA m(4)C1402 methyltransferase</fullName>
    </alternativeName>
    <alternativeName>
        <fullName evidence="1">rRNA (cytosine-N(4)-)-methyltransferase RsmH</fullName>
    </alternativeName>
</protein>